<evidence type="ECO:0000255" key="1">
    <source>
        <dbReference type="HAMAP-Rule" id="MF_01201"/>
    </source>
</evidence>
<feature type="chain" id="PRO_0000272405" description="Alanine racemase">
    <location>
        <begin position="1"/>
        <end position="462"/>
    </location>
</feature>
<feature type="domain" description="RPE1 insert">
    <location>
        <begin position="286"/>
        <end position="332"/>
    </location>
</feature>
<feature type="region of interest" description="Unknown insert">
    <location>
        <begin position="73"/>
        <end position="132"/>
    </location>
</feature>
<feature type="active site" description="Proton acceptor; specific for D-alanine" evidence="1">
    <location>
        <position position="34"/>
    </location>
</feature>
<feature type="active site" description="Proton acceptor; specific for L-alanine" evidence="1">
    <location>
        <position position="357"/>
    </location>
</feature>
<feature type="binding site" evidence="1">
    <location>
        <position position="193"/>
    </location>
    <ligand>
        <name>substrate</name>
    </ligand>
</feature>
<feature type="binding site" evidence="1">
    <location>
        <position position="405"/>
    </location>
    <ligand>
        <name>substrate</name>
    </ligand>
</feature>
<feature type="modified residue" description="N6-(pyridoxal phosphate)lysine" evidence="1">
    <location>
        <position position="34"/>
    </location>
</feature>
<dbReference type="EC" id="5.1.1.1" evidence="1"/>
<dbReference type="EMBL" id="CP000053">
    <property type="protein sequence ID" value="AAY60930.1"/>
    <property type="molecule type" value="Genomic_DNA"/>
</dbReference>
<dbReference type="SMR" id="Q4UNC8"/>
<dbReference type="STRING" id="315456.RF_0079"/>
<dbReference type="KEGG" id="rfe:RF_0079"/>
<dbReference type="eggNOG" id="COG0787">
    <property type="taxonomic scope" value="Bacteria"/>
</dbReference>
<dbReference type="HOGENOM" id="CLU_028393_1_1_5"/>
<dbReference type="OrthoDB" id="9813814at2"/>
<dbReference type="UniPathway" id="UPA00042">
    <property type="reaction ID" value="UER00497"/>
</dbReference>
<dbReference type="Proteomes" id="UP000008548">
    <property type="component" value="Chromosome"/>
</dbReference>
<dbReference type="GO" id="GO:0005829">
    <property type="term" value="C:cytosol"/>
    <property type="evidence" value="ECO:0007669"/>
    <property type="project" value="TreeGrafter"/>
</dbReference>
<dbReference type="GO" id="GO:0008784">
    <property type="term" value="F:alanine racemase activity"/>
    <property type="evidence" value="ECO:0007669"/>
    <property type="project" value="UniProtKB-UniRule"/>
</dbReference>
<dbReference type="GO" id="GO:0030170">
    <property type="term" value="F:pyridoxal phosphate binding"/>
    <property type="evidence" value="ECO:0007669"/>
    <property type="project" value="UniProtKB-UniRule"/>
</dbReference>
<dbReference type="GO" id="GO:0030632">
    <property type="term" value="P:D-alanine biosynthetic process"/>
    <property type="evidence" value="ECO:0007669"/>
    <property type="project" value="UniProtKB-UniRule"/>
</dbReference>
<dbReference type="CDD" id="cd00430">
    <property type="entry name" value="PLPDE_III_AR"/>
    <property type="match status" value="1"/>
</dbReference>
<dbReference type="Gene3D" id="3.20.20.10">
    <property type="entry name" value="Alanine racemase"/>
    <property type="match status" value="1"/>
</dbReference>
<dbReference type="Gene3D" id="2.40.37.10">
    <property type="entry name" value="Lyase, Ornithine Decarboxylase, Chain A, domain 1"/>
    <property type="match status" value="1"/>
</dbReference>
<dbReference type="HAMAP" id="MF_01201">
    <property type="entry name" value="Ala_racemase"/>
    <property type="match status" value="1"/>
</dbReference>
<dbReference type="InterPro" id="IPR000821">
    <property type="entry name" value="Ala_racemase"/>
</dbReference>
<dbReference type="InterPro" id="IPR009006">
    <property type="entry name" value="Ala_racemase/Decarboxylase_C"/>
</dbReference>
<dbReference type="InterPro" id="IPR011079">
    <property type="entry name" value="Ala_racemase_C"/>
</dbReference>
<dbReference type="InterPro" id="IPR001608">
    <property type="entry name" value="Ala_racemase_N"/>
</dbReference>
<dbReference type="InterPro" id="IPR020622">
    <property type="entry name" value="Ala_racemase_pyridoxalP-BS"/>
</dbReference>
<dbReference type="InterPro" id="IPR029066">
    <property type="entry name" value="PLP-binding_barrel"/>
</dbReference>
<dbReference type="InterPro" id="IPR005728">
    <property type="entry name" value="RPE1"/>
</dbReference>
<dbReference type="NCBIfam" id="NF000792">
    <property type="entry name" value="PRK00053.2-3"/>
    <property type="match status" value="1"/>
</dbReference>
<dbReference type="NCBIfam" id="TIGR01045">
    <property type="entry name" value="RPE1"/>
    <property type="match status" value="1"/>
</dbReference>
<dbReference type="PANTHER" id="PTHR30511">
    <property type="entry name" value="ALANINE RACEMASE"/>
    <property type="match status" value="1"/>
</dbReference>
<dbReference type="PANTHER" id="PTHR30511:SF0">
    <property type="entry name" value="ALANINE RACEMASE, CATABOLIC-RELATED"/>
    <property type="match status" value="1"/>
</dbReference>
<dbReference type="Pfam" id="PF00842">
    <property type="entry name" value="Ala_racemase_C"/>
    <property type="match status" value="1"/>
</dbReference>
<dbReference type="Pfam" id="PF01168">
    <property type="entry name" value="Ala_racemase_N"/>
    <property type="match status" value="2"/>
</dbReference>
<dbReference type="SMART" id="SM01005">
    <property type="entry name" value="Ala_racemase_C"/>
    <property type="match status" value="1"/>
</dbReference>
<dbReference type="SUPFAM" id="SSF50621">
    <property type="entry name" value="Alanine racemase C-terminal domain-like"/>
    <property type="match status" value="1"/>
</dbReference>
<dbReference type="SUPFAM" id="SSF51419">
    <property type="entry name" value="PLP-binding barrel"/>
    <property type="match status" value="2"/>
</dbReference>
<dbReference type="PROSITE" id="PS00395">
    <property type="entry name" value="ALANINE_RACEMASE"/>
    <property type="match status" value="1"/>
</dbReference>
<proteinExistence type="inferred from homology"/>
<name>ALR_RICFE</name>
<sequence>MSLCTLEINLSAIKNNYLLLQDICKTSLVGAAVKANGYGLGAVQISKALIEENCRHFFVASSEEGVNLRKALASWHESVFRHCEKNYTVIRRSNPVKNSVSQNFFNYFSGLQQCFAPRNDGSSIHATTPKALDNDVNILVLNGVFEHDALELIEYNLTPVLNNLKQIEIWQKFSNLKNRLLPCYLHFNTGINRLGLTHNEIEQLINNRDLLKGLDLQYIISHLAVSEEIDNPYNLEQLNRFKTYLQYFPNVKASLANSGGIFLGQDYHFDLARPGAALYGLNPVIDLSNNLSYKEEFEGDTERRTAAYINVREDSSTGSTYKLPLEGGYSRGLQNPVTLKAPIIHLQNLTLDSHIGYNMTFTTERDSVIATLPLGYADGFSRNFSNQGEVFINGRSVPIVGRISMDLINIDVTDLPPLDIFLGQEAEIIGNYCTPDKIASIIGTIGYEVLTSLGSRYKRIYK</sequence>
<reference key="1">
    <citation type="journal article" date="2005" name="PLoS Biol.">
        <title>The genome sequence of Rickettsia felis identifies the first putative conjugative plasmid in an obligate intracellular parasite.</title>
        <authorList>
            <person name="Ogata H."/>
            <person name="Renesto P."/>
            <person name="Audic S."/>
            <person name="Robert C."/>
            <person name="Blanc G."/>
            <person name="Fournier P.-E."/>
            <person name="Parinello H."/>
            <person name="Claverie J.-M."/>
            <person name="Raoult D."/>
        </authorList>
    </citation>
    <scope>NUCLEOTIDE SEQUENCE [LARGE SCALE GENOMIC DNA]</scope>
    <source>
        <strain>ATCC VR-1525 / URRWXCal2</strain>
    </source>
</reference>
<comment type="function">
    <text evidence="1">Catalyzes the interconversion of L-alanine and D-alanine. May also act on other amino acids.</text>
</comment>
<comment type="catalytic activity">
    <reaction evidence="1">
        <text>L-alanine = D-alanine</text>
        <dbReference type="Rhea" id="RHEA:20249"/>
        <dbReference type="ChEBI" id="CHEBI:57416"/>
        <dbReference type="ChEBI" id="CHEBI:57972"/>
        <dbReference type="EC" id="5.1.1.1"/>
    </reaction>
</comment>
<comment type="cofactor">
    <cofactor evidence="1">
        <name>pyridoxal 5'-phosphate</name>
        <dbReference type="ChEBI" id="CHEBI:597326"/>
    </cofactor>
</comment>
<comment type="pathway">
    <text evidence="1">Amino-acid biosynthesis; D-alanine biosynthesis; D-alanine from L-alanine: step 1/1.</text>
</comment>
<comment type="similarity">
    <text evidence="1">Belongs to the alanine racemase family.</text>
</comment>
<protein>
    <recommendedName>
        <fullName evidence="1">Alanine racemase</fullName>
        <ecNumber evidence="1">5.1.1.1</ecNumber>
    </recommendedName>
</protein>
<organism>
    <name type="scientific">Rickettsia felis (strain ATCC VR-1525 / URRWXCal2)</name>
    <name type="common">Rickettsia azadi</name>
    <dbReference type="NCBI Taxonomy" id="315456"/>
    <lineage>
        <taxon>Bacteria</taxon>
        <taxon>Pseudomonadati</taxon>
        <taxon>Pseudomonadota</taxon>
        <taxon>Alphaproteobacteria</taxon>
        <taxon>Rickettsiales</taxon>
        <taxon>Rickettsiaceae</taxon>
        <taxon>Rickettsieae</taxon>
        <taxon>Rickettsia</taxon>
        <taxon>spotted fever group</taxon>
    </lineage>
</organism>
<keyword id="KW-0413">Isomerase</keyword>
<keyword id="KW-0663">Pyridoxal phosphate</keyword>
<gene>
    <name type="primary">alr</name>
    <name type="ordered locus">RF_0079</name>
</gene>
<accession>Q4UNC8</accession>